<accession>B7LZJ1</accession>
<protein>
    <recommendedName>
        <fullName evidence="1">3,4-dihydroxy-2-butanone 4-phosphate synthase</fullName>
        <shortName evidence="1">DHBP synthase</shortName>
        <ecNumber evidence="1">4.1.99.12</ecNumber>
    </recommendedName>
</protein>
<proteinExistence type="inferred from homology"/>
<evidence type="ECO:0000255" key="1">
    <source>
        <dbReference type="HAMAP-Rule" id="MF_00180"/>
    </source>
</evidence>
<name>RIBB_ECO8A</name>
<organism>
    <name type="scientific">Escherichia coli O8 (strain IAI1)</name>
    <dbReference type="NCBI Taxonomy" id="585034"/>
    <lineage>
        <taxon>Bacteria</taxon>
        <taxon>Pseudomonadati</taxon>
        <taxon>Pseudomonadota</taxon>
        <taxon>Gammaproteobacteria</taxon>
        <taxon>Enterobacterales</taxon>
        <taxon>Enterobacteriaceae</taxon>
        <taxon>Escherichia</taxon>
    </lineage>
</organism>
<reference key="1">
    <citation type="journal article" date="2009" name="PLoS Genet.">
        <title>Organised genome dynamics in the Escherichia coli species results in highly diverse adaptive paths.</title>
        <authorList>
            <person name="Touchon M."/>
            <person name="Hoede C."/>
            <person name="Tenaillon O."/>
            <person name="Barbe V."/>
            <person name="Baeriswyl S."/>
            <person name="Bidet P."/>
            <person name="Bingen E."/>
            <person name="Bonacorsi S."/>
            <person name="Bouchier C."/>
            <person name="Bouvet O."/>
            <person name="Calteau A."/>
            <person name="Chiapello H."/>
            <person name="Clermont O."/>
            <person name="Cruveiller S."/>
            <person name="Danchin A."/>
            <person name="Diard M."/>
            <person name="Dossat C."/>
            <person name="Karoui M.E."/>
            <person name="Frapy E."/>
            <person name="Garry L."/>
            <person name="Ghigo J.M."/>
            <person name="Gilles A.M."/>
            <person name="Johnson J."/>
            <person name="Le Bouguenec C."/>
            <person name="Lescat M."/>
            <person name="Mangenot S."/>
            <person name="Martinez-Jehanne V."/>
            <person name="Matic I."/>
            <person name="Nassif X."/>
            <person name="Oztas S."/>
            <person name="Petit M.A."/>
            <person name="Pichon C."/>
            <person name="Rouy Z."/>
            <person name="Ruf C.S."/>
            <person name="Schneider D."/>
            <person name="Tourret J."/>
            <person name="Vacherie B."/>
            <person name="Vallenet D."/>
            <person name="Medigue C."/>
            <person name="Rocha E.P.C."/>
            <person name="Denamur E."/>
        </authorList>
    </citation>
    <scope>NUCLEOTIDE SEQUENCE [LARGE SCALE GENOMIC DNA]</scope>
    <source>
        <strain>IAI1</strain>
    </source>
</reference>
<keyword id="KW-0456">Lyase</keyword>
<keyword id="KW-0460">Magnesium</keyword>
<keyword id="KW-0464">Manganese</keyword>
<keyword id="KW-0479">Metal-binding</keyword>
<keyword id="KW-0686">Riboflavin biosynthesis</keyword>
<sequence length="217" mass="23353">MNQTLLSSFGTPFERVENALAALREGRGVMVLDDEDRENEGDMIFPAETMTVEQMALTIRHGSGIVCLCITEDRRKQLDLPMMVENNTSAYGTGFTVTIEAAEGVTTGVSAADRITTVRAAIADGAKPSDLNRPGHVFPLRAQAGGVLTRGGHTEATIDLMTLAGFKPAGVLCELTNDDGTMARAPECIEFANKHNMALVTIEDLVAYRQAHERKAS</sequence>
<comment type="function">
    <text evidence="1">Catalyzes the conversion of D-ribulose 5-phosphate to formate and 3,4-dihydroxy-2-butanone 4-phosphate.</text>
</comment>
<comment type="catalytic activity">
    <reaction evidence="1">
        <text>D-ribulose 5-phosphate = (2S)-2-hydroxy-3-oxobutyl phosphate + formate + H(+)</text>
        <dbReference type="Rhea" id="RHEA:18457"/>
        <dbReference type="ChEBI" id="CHEBI:15378"/>
        <dbReference type="ChEBI" id="CHEBI:15740"/>
        <dbReference type="ChEBI" id="CHEBI:58121"/>
        <dbReference type="ChEBI" id="CHEBI:58830"/>
        <dbReference type="EC" id="4.1.99.12"/>
    </reaction>
</comment>
<comment type="cofactor">
    <cofactor evidence="1">
        <name>Mg(2+)</name>
        <dbReference type="ChEBI" id="CHEBI:18420"/>
    </cofactor>
    <cofactor evidence="1">
        <name>Mn(2+)</name>
        <dbReference type="ChEBI" id="CHEBI:29035"/>
    </cofactor>
    <text evidence="1">Binds 2 divalent metal cations per subunit. Magnesium or manganese.</text>
</comment>
<comment type="pathway">
    <text evidence="1">Cofactor biosynthesis; riboflavin biosynthesis; 2-hydroxy-3-oxobutyl phosphate from D-ribulose 5-phosphate: step 1/1.</text>
</comment>
<comment type="subunit">
    <text evidence="1">Homodimer.</text>
</comment>
<comment type="similarity">
    <text evidence="1">Belongs to the DHBP synthase family.</text>
</comment>
<feature type="chain" id="PRO_1000118437" description="3,4-dihydroxy-2-butanone 4-phosphate synthase">
    <location>
        <begin position="1"/>
        <end position="217"/>
    </location>
</feature>
<feature type="binding site" evidence="1">
    <location>
        <begin position="37"/>
        <end position="38"/>
    </location>
    <ligand>
        <name>D-ribulose 5-phosphate</name>
        <dbReference type="ChEBI" id="CHEBI:58121"/>
    </ligand>
</feature>
<feature type="binding site" evidence="1">
    <location>
        <position position="38"/>
    </location>
    <ligand>
        <name>Mg(2+)</name>
        <dbReference type="ChEBI" id="CHEBI:18420"/>
        <label>1</label>
    </ligand>
</feature>
<feature type="binding site" evidence="1">
    <location>
        <position position="38"/>
    </location>
    <ligand>
        <name>Mg(2+)</name>
        <dbReference type="ChEBI" id="CHEBI:18420"/>
        <label>2</label>
    </ligand>
</feature>
<feature type="binding site" evidence="1">
    <location>
        <position position="42"/>
    </location>
    <ligand>
        <name>D-ribulose 5-phosphate</name>
        <dbReference type="ChEBI" id="CHEBI:58121"/>
    </ligand>
</feature>
<feature type="binding site" evidence="1">
    <location>
        <begin position="150"/>
        <end position="154"/>
    </location>
    <ligand>
        <name>D-ribulose 5-phosphate</name>
        <dbReference type="ChEBI" id="CHEBI:58121"/>
    </ligand>
</feature>
<feature type="binding site" evidence="1">
    <location>
        <position position="153"/>
    </location>
    <ligand>
        <name>Mg(2+)</name>
        <dbReference type="ChEBI" id="CHEBI:18420"/>
        <label>2</label>
    </ligand>
</feature>
<feature type="binding site" evidence="1">
    <location>
        <position position="174"/>
    </location>
    <ligand>
        <name>D-ribulose 5-phosphate</name>
        <dbReference type="ChEBI" id="CHEBI:58121"/>
    </ligand>
</feature>
<feature type="site" description="Essential for catalytic activity" evidence="1">
    <location>
        <position position="136"/>
    </location>
</feature>
<feature type="site" description="Essential for catalytic activity" evidence="1">
    <location>
        <position position="174"/>
    </location>
</feature>
<gene>
    <name evidence="1" type="primary">ribB</name>
    <name type="ordered locus">ECIAI1_3189</name>
</gene>
<dbReference type="EC" id="4.1.99.12" evidence="1"/>
<dbReference type="EMBL" id="CU928160">
    <property type="protein sequence ID" value="CAR00003.1"/>
    <property type="molecule type" value="Genomic_DNA"/>
</dbReference>
<dbReference type="RefSeq" id="WP_001076997.1">
    <property type="nucleotide sequence ID" value="NC_011741.1"/>
</dbReference>
<dbReference type="SMR" id="B7LZJ1"/>
<dbReference type="GeneID" id="93778953"/>
<dbReference type="KEGG" id="ecr:ECIAI1_3189"/>
<dbReference type="HOGENOM" id="CLU_020273_3_0_6"/>
<dbReference type="UniPathway" id="UPA00275">
    <property type="reaction ID" value="UER00399"/>
</dbReference>
<dbReference type="GO" id="GO:0005829">
    <property type="term" value="C:cytosol"/>
    <property type="evidence" value="ECO:0007669"/>
    <property type="project" value="TreeGrafter"/>
</dbReference>
<dbReference type="GO" id="GO:0008686">
    <property type="term" value="F:3,4-dihydroxy-2-butanone-4-phosphate synthase activity"/>
    <property type="evidence" value="ECO:0007669"/>
    <property type="project" value="UniProtKB-UniRule"/>
</dbReference>
<dbReference type="GO" id="GO:0000287">
    <property type="term" value="F:magnesium ion binding"/>
    <property type="evidence" value="ECO:0007669"/>
    <property type="project" value="UniProtKB-UniRule"/>
</dbReference>
<dbReference type="GO" id="GO:0030145">
    <property type="term" value="F:manganese ion binding"/>
    <property type="evidence" value="ECO:0007669"/>
    <property type="project" value="UniProtKB-UniRule"/>
</dbReference>
<dbReference type="GO" id="GO:0009231">
    <property type="term" value="P:riboflavin biosynthetic process"/>
    <property type="evidence" value="ECO:0007669"/>
    <property type="project" value="UniProtKB-UniRule"/>
</dbReference>
<dbReference type="FunFam" id="3.90.870.10:FF:000002">
    <property type="entry name" value="3,4-dihydroxy-2-butanone 4-phosphate synthase"/>
    <property type="match status" value="1"/>
</dbReference>
<dbReference type="Gene3D" id="3.90.870.10">
    <property type="entry name" value="DHBP synthase"/>
    <property type="match status" value="1"/>
</dbReference>
<dbReference type="HAMAP" id="MF_00180">
    <property type="entry name" value="RibB"/>
    <property type="match status" value="1"/>
</dbReference>
<dbReference type="InterPro" id="IPR017945">
    <property type="entry name" value="DHBP_synth_RibB-like_a/b_dom"/>
</dbReference>
<dbReference type="InterPro" id="IPR000422">
    <property type="entry name" value="DHBP_synthase_RibB"/>
</dbReference>
<dbReference type="NCBIfam" id="TIGR00506">
    <property type="entry name" value="ribB"/>
    <property type="match status" value="1"/>
</dbReference>
<dbReference type="PANTHER" id="PTHR21327:SF38">
    <property type="entry name" value="3,4-DIHYDROXY-2-BUTANONE 4-PHOSPHATE SYNTHASE"/>
    <property type="match status" value="1"/>
</dbReference>
<dbReference type="PANTHER" id="PTHR21327">
    <property type="entry name" value="GTP CYCLOHYDROLASE II-RELATED"/>
    <property type="match status" value="1"/>
</dbReference>
<dbReference type="Pfam" id="PF00926">
    <property type="entry name" value="DHBP_synthase"/>
    <property type="match status" value="1"/>
</dbReference>
<dbReference type="SUPFAM" id="SSF55821">
    <property type="entry name" value="YrdC/RibB"/>
    <property type="match status" value="1"/>
</dbReference>